<organism>
    <name type="scientific">Yaba-like disease virus</name>
    <name type="common">YLDV</name>
    <dbReference type="NCBI Taxonomy" id="132475"/>
    <lineage>
        <taxon>Viruses</taxon>
        <taxon>Varidnaviria</taxon>
        <taxon>Bamfordvirae</taxon>
        <taxon>Nucleocytoviricota</taxon>
        <taxon>Pokkesviricetes</taxon>
        <taxon>Chitovirales</taxon>
        <taxon>Poxviridae</taxon>
        <taxon>Chordopoxvirinae</taxon>
        <taxon>Yatapoxvirus</taxon>
        <taxon>Tanapox virus</taxon>
    </lineage>
</organism>
<reference key="1">
    <citation type="journal article" date="2001" name="Virology">
        <title>The genome sequence of Yaba-like disease virus, a yatapoxvirus.</title>
        <authorList>
            <person name="Lee H.-J."/>
            <person name="Essani K."/>
            <person name="Smith G.L."/>
        </authorList>
    </citation>
    <scope>NUCLEOTIDE SEQUENCE [LARGE SCALE GENOMIC DNA]</scope>
</reference>
<name>RIR2_YLDV</name>
<sequence length="325" mass="37836">MNTSCEPILKPTLNKYVVFPIVYEDIWKMYKKAVASFWTVEEVDLSKDFSDWLKLSDNEKNFIKHILAFFAASDGIVNENLAERFYSEVQISEARCFYGFQIAMENIHSEMYSLLIDTYILDSKEKNYLFNAIENMNCVKQKANWAKKWIESKNRTYGERLVAFAAVEGIFFSGSFAAIFWIKKRGLMPGLTFSNELISRDEGLHCDFACIMFKHLLNPPLNSVVRDIIIEAVNIEKNFLTEAIPVKLIGMNCDLMKQYIEFVADRLLLELGCDKYYCSKNPFDFMENISLEGKTNFFEKRVSEYQKMSVMSNKKDNVFSLDIDF</sequence>
<keyword id="KW-0215">Deoxyribonucleotide synthesis</keyword>
<keyword id="KW-0408">Iron</keyword>
<keyword id="KW-0479">Metal-binding</keyword>
<keyword id="KW-0560">Oxidoreductase</keyword>
<proteinExistence type="inferred from homology"/>
<comment type="function">
    <text evidence="1">Ribonucleoside-diphosphate reductase holoenzyme provides the precursors necessary for viral DNA synthesis. Allows virus growth in non-dividing cells. Catalyzes the biosynthesis of deoxyribonucleotides from the corresponding ribonucleotides (By similarity).</text>
</comment>
<comment type="catalytic activity">
    <reaction evidence="2">
        <text>a 2'-deoxyribonucleoside 5'-diphosphate + [thioredoxin]-disulfide + H2O = a ribonucleoside 5'-diphosphate + [thioredoxin]-dithiol</text>
        <dbReference type="Rhea" id="RHEA:23252"/>
        <dbReference type="Rhea" id="RHEA-COMP:10698"/>
        <dbReference type="Rhea" id="RHEA-COMP:10700"/>
        <dbReference type="ChEBI" id="CHEBI:15377"/>
        <dbReference type="ChEBI" id="CHEBI:29950"/>
        <dbReference type="ChEBI" id="CHEBI:50058"/>
        <dbReference type="ChEBI" id="CHEBI:57930"/>
        <dbReference type="ChEBI" id="CHEBI:73316"/>
        <dbReference type="EC" id="1.17.4.1"/>
    </reaction>
</comment>
<comment type="cofactor">
    <cofactor evidence="1">
        <name>Fe cation</name>
        <dbReference type="ChEBI" id="CHEBI:24875"/>
    </cofactor>
    <text evidence="1">Binds 2 iron ions per subunit.</text>
</comment>
<comment type="subunit">
    <text>Heterodimer of a large and a small chain.</text>
</comment>
<comment type="similarity">
    <text evidence="3">Belongs to the ribonucleoside diphosphate reductase small chain family.</text>
</comment>
<organismHost>
    <name type="scientific">Homo sapiens</name>
    <name type="common">Human</name>
    <dbReference type="NCBI Taxonomy" id="9606"/>
</organismHost>
<organismHost>
    <name type="scientific">Simiiformes</name>
    <dbReference type="NCBI Taxonomy" id="314293"/>
</organismHost>
<evidence type="ECO:0000250" key="1"/>
<evidence type="ECO:0000255" key="2">
    <source>
        <dbReference type="PROSITE-ProRule" id="PRU10014"/>
    </source>
</evidence>
<evidence type="ECO:0000305" key="3"/>
<gene>
    <name type="ordered locus">20L</name>
</gene>
<accession>Q9DHU2</accession>
<protein>
    <recommendedName>
        <fullName>Ribonucleoside-diphosphate reductase small chain</fullName>
        <ecNumber>1.17.4.1</ecNumber>
    </recommendedName>
    <alternativeName>
        <fullName>Ribonucleotide reductase small subunit</fullName>
    </alternativeName>
</protein>
<feature type="chain" id="PRO_0000190501" description="Ribonucleoside-diphosphate reductase small chain">
    <location>
        <begin position="1"/>
        <end position="325"/>
    </location>
</feature>
<feature type="active site" evidence="2">
    <location>
        <position position="112"/>
    </location>
</feature>
<feature type="binding site" evidence="2">
    <location>
        <position position="74"/>
    </location>
    <ligand>
        <name>Fe cation</name>
        <dbReference type="ChEBI" id="CHEBI:24875"/>
        <label>1</label>
    </ligand>
</feature>
<feature type="binding site" evidence="2">
    <location>
        <position position="105"/>
    </location>
    <ligand>
        <name>Fe cation</name>
        <dbReference type="ChEBI" id="CHEBI:24875"/>
        <label>1</label>
    </ligand>
</feature>
<feature type="binding site" evidence="1">
    <location>
        <position position="105"/>
    </location>
    <ligand>
        <name>Fe cation</name>
        <dbReference type="ChEBI" id="CHEBI:24875"/>
        <label>2</label>
    </ligand>
</feature>
<feature type="binding site" evidence="2">
    <location>
        <position position="108"/>
    </location>
    <ligand>
        <name>Fe cation</name>
        <dbReference type="ChEBI" id="CHEBI:24875"/>
        <label>1</label>
    </ligand>
</feature>
<feature type="binding site" evidence="1">
    <location>
        <position position="168"/>
    </location>
    <ligand>
        <name>Fe cation</name>
        <dbReference type="ChEBI" id="CHEBI:24875"/>
        <label>2</label>
    </ligand>
</feature>
<feature type="binding site" evidence="1">
    <location>
        <position position="202"/>
    </location>
    <ligand>
        <name>Fe cation</name>
        <dbReference type="ChEBI" id="CHEBI:24875"/>
        <label>2</label>
    </ligand>
</feature>
<feature type="binding site" evidence="1">
    <location>
        <position position="205"/>
    </location>
    <ligand>
        <name>Fe cation</name>
        <dbReference type="ChEBI" id="CHEBI:24875"/>
        <label>2</label>
    </ligand>
</feature>
<dbReference type="EC" id="1.17.4.1"/>
<dbReference type="EMBL" id="AJ293568">
    <property type="protein sequence ID" value="CAC21258.1"/>
    <property type="molecule type" value="Genomic_DNA"/>
</dbReference>
<dbReference type="RefSeq" id="NP_073405.1">
    <property type="nucleotide sequence ID" value="NC_002642.1"/>
</dbReference>
<dbReference type="SMR" id="Q9DHU2"/>
<dbReference type="GeneID" id="918732"/>
<dbReference type="KEGG" id="vg:918732"/>
<dbReference type="OrthoDB" id="4477at10239"/>
<dbReference type="Proteomes" id="UP000136581">
    <property type="component" value="Genome"/>
</dbReference>
<dbReference type="GO" id="GO:0046872">
    <property type="term" value="F:metal ion binding"/>
    <property type="evidence" value="ECO:0007669"/>
    <property type="project" value="UniProtKB-KW"/>
</dbReference>
<dbReference type="GO" id="GO:0004748">
    <property type="term" value="F:ribonucleoside-diphosphate reductase activity, thioredoxin disulfide as acceptor"/>
    <property type="evidence" value="ECO:0007669"/>
    <property type="project" value="UniProtKB-EC"/>
</dbReference>
<dbReference type="GO" id="GO:0009263">
    <property type="term" value="P:deoxyribonucleotide biosynthetic process"/>
    <property type="evidence" value="ECO:0007669"/>
    <property type="project" value="UniProtKB-KW"/>
</dbReference>
<dbReference type="CDD" id="cd01049">
    <property type="entry name" value="RNRR2"/>
    <property type="match status" value="1"/>
</dbReference>
<dbReference type="Gene3D" id="1.10.620.20">
    <property type="entry name" value="Ribonucleotide Reductase, subunit A"/>
    <property type="match status" value="1"/>
</dbReference>
<dbReference type="InterPro" id="IPR009078">
    <property type="entry name" value="Ferritin-like_SF"/>
</dbReference>
<dbReference type="InterPro" id="IPR012348">
    <property type="entry name" value="RNR-like"/>
</dbReference>
<dbReference type="InterPro" id="IPR033909">
    <property type="entry name" value="RNR_small"/>
</dbReference>
<dbReference type="InterPro" id="IPR030475">
    <property type="entry name" value="RNR_small_AS"/>
</dbReference>
<dbReference type="InterPro" id="IPR000358">
    <property type="entry name" value="RNR_small_fam"/>
</dbReference>
<dbReference type="PANTHER" id="PTHR23409">
    <property type="entry name" value="RIBONUCLEOSIDE-DIPHOSPHATE REDUCTASE SMALL CHAIN"/>
    <property type="match status" value="1"/>
</dbReference>
<dbReference type="PANTHER" id="PTHR23409:SF18">
    <property type="entry name" value="RIBONUCLEOSIDE-DIPHOSPHATE REDUCTASE SUBUNIT M2"/>
    <property type="match status" value="1"/>
</dbReference>
<dbReference type="Pfam" id="PF00268">
    <property type="entry name" value="Ribonuc_red_sm"/>
    <property type="match status" value="1"/>
</dbReference>
<dbReference type="SUPFAM" id="SSF47240">
    <property type="entry name" value="Ferritin-like"/>
    <property type="match status" value="1"/>
</dbReference>
<dbReference type="PROSITE" id="PS00368">
    <property type="entry name" value="RIBORED_SMALL"/>
    <property type="match status" value="1"/>
</dbReference>